<evidence type="ECO:0000255" key="1">
    <source>
        <dbReference type="HAMAP-Rule" id="MF_00110"/>
    </source>
</evidence>
<keyword id="KW-0028">Amino-acid biosynthesis</keyword>
<keyword id="KW-0057">Aromatic amino acid biosynthesis</keyword>
<keyword id="KW-0170">Cobalt</keyword>
<keyword id="KW-0963">Cytoplasm</keyword>
<keyword id="KW-0456">Lyase</keyword>
<keyword id="KW-0479">Metal-binding</keyword>
<keyword id="KW-0520">NAD</keyword>
<keyword id="KW-0547">Nucleotide-binding</keyword>
<keyword id="KW-0862">Zinc</keyword>
<dbReference type="EC" id="4.2.3.4" evidence="1"/>
<dbReference type="EMBL" id="AE009949">
    <property type="protein sequence ID" value="AAL98148.1"/>
    <property type="molecule type" value="Genomic_DNA"/>
</dbReference>
<dbReference type="RefSeq" id="WP_011018028.1">
    <property type="nucleotide sequence ID" value="NC_003485.1"/>
</dbReference>
<dbReference type="SMR" id="Q8P036"/>
<dbReference type="KEGG" id="spm:spyM18_1586"/>
<dbReference type="HOGENOM" id="CLU_001201_0_1_9"/>
<dbReference type="UniPathway" id="UPA00053">
    <property type="reaction ID" value="UER00085"/>
</dbReference>
<dbReference type="GO" id="GO:0005737">
    <property type="term" value="C:cytoplasm"/>
    <property type="evidence" value="ECO:0007669"/>
    <property type="project" value="UniProtKB-SubCell"/>
</dbReference>
<dbReference type="GO" id="GO:0003856">
    <property type="term" value="F:3-dehydroquinate synthase activity"/>
    <property type="evidence" value="ECO:0007669"/>
    <property type="project" value="UniProtKB-UniRule"/>
</dbReference>
<dbReference type="GO" id="GO:0046872">
    <property type="term" value="F:metal ion binding"/>
    <property type="evidence" value="ECO:0007669"/>
    <property type="project" value="UniProtKB-KW"/>
</dbReference>
<dbReference type="GO" id="GO:0000166">
    <property type="term" value="F:nucleotide binding"/>
    <property type="evidence" value="ECO:0007669"/>
    <property type="project" value="UniProtKB-KW"/>
</dbReference>
<dbReference type="GO" id="GO:0008652">
    <property type="term" value="P:amino acid biosynthetic process"/>
    <property type="evidence" value="ECO:0007669"/>
    <property type="project" value="UniProtKB-KW"/>
</dbReference>
<dbReference type="GO" id="GO:0009073">
    <property type="term" value="P:aromatic amino acid family biosynthetic process"/>
    <property type="evidence" value="ECO:0007669"/>
    <property type="project" value="UniProtKB-KW"/>
</dbReference>
<dbReference type="GO" id="GO:0009423">
    <property type="term" value="P:chorismate biosynthetic process"/>
    <property type="evidence" value="ECO:0007669"/>
    <property type="project" value="UniProtKB-UniRule"/>
</dbReference>
<dbReference type="CDD" id="cd08195">
    <property type="entry name" value="DHQS"/>
    <property type="match status" value="1"/>
</dbReference>
<dbReference type="FunFam" id="3.40.50.1970:FF:000007">
    <property type="entry name" value="Pentafunctional AROM polypeptide"/>
    <property type="match status" value="1"/>
</dbReference>
<dbReference type="Gene3D" id="3.40.50.1970">
    <property type="match status" value="1"/>
</dbReference>
<dbReference type="Gene3D" id="1.20.1090.10">
    <property type="entry name" value="Dehydroquinate synthase-like - alpha domain"/>
    <property type="match status" value="1"/>
</dbReference>
<dbReference type="HAMAP" id="MF_00110">
    <property type="entry name" value="DHQ_synthase"/>
    <property type="match status" value="1"/>
</dbReference>
<dbReference type="InterPro" id="IPR050071">
    <property type="entry name" value="Dehydroquinate_synthase"/>
</dbReference>
<dbReference type="InterPro" id="IPR016037">
    <property type="entry name" value="DHQ_synth_AroB"/>
</dbReference>
<dbReference type="InterPro" id="IPR030963">
    <property type="entry name" value="DHQ_synth_fam"/>
</dbReference>
<dbReference type="InterPro" id="IPR030960">
    <property type="entry name" value="DHQS/DOIS_N"/>
</dbReference>
<dbReference type="InterPro" id="IPR056179">
    <property type="entry name" value="DHQS_C"/>
</dbReference>
<dbReference type="NCBIfam" id="TIGR01357">
    <property type="entry name" value="aroB"/>
    <property type="match status" value="1"/>
</dbReference>
<dbReference type="PANTHER" id="PTHR43622">
    <property type="entry name" value="3-DEHYDROQUINATE SYNTHASE"/>
    <property type="match status" value="1"/>
</dbReference>
<dbReference type="PANTHER" id="PTHR43622:SF1">
    <property type="entry name" value="3-DEHYDROQUINATE SYNTHASE"/>
    <property type="match status" value="1"/>
</dbReference>
<dbReference type="Pfam" id="PF01761">
    <property type="entry name" value="DHQ_synthase"/>
    <property type="match status" value="1"/>
</dbReference>
<dbReference type="Pfam" id="PF24621">
    <property type="entry name" value="DHQS_C"/>
    <property type="match status" value="1"/>
</dbReference>
<dbReference type="PIRSF" id="PIRSF001455">
    <property type="entry name" value="DHQ_synth"/>
    <property type="match status" value="1"/>
</dbReference>
<dbReference type="SUPFAM" id="SSF56796">
    <property type="entry name" value="Dehydroquinate synthase-like"/>
    <property type="match status" value="1"/>
</dbReference>
<name>AROB_STRP8</name>
<accession>Q8P036</accession>
<gene>
    <name evidence="1" type="primary">aroB</name>
    <name type="ordered locus">spyM18_1586</name>
</gene>
<proteinExistence type="inferred from homology"/>
<sequence>MPQTLHVHSRVKDYDILFTDHVLKTLADCLGERKQRKLLFITDQTVYHLYQTLFEEFAQQYNAFVHVCPPGGQSKSLERVSAIYDQLIAENFSKKDMIITIGGGVVGDLGGFVAATYYRGIPYIQIPTTLLSQVDSSIGGKVGVHFKGLTNMIGSIYPPEAIIISTTFLETLPQREFSCGISEMLKIGFIHDRPLFQQLRDFQKETDKQGLERLIYQSISNKKRIVEQDEFENGLRMSLNFGHTLGHAIESLCHHDFYHHGEAIAIGMVVDAKLAVSKRLLPKEDLDSLLQVFERYQLPTTLERADVSATSLFDVFKTDKKNSEQHIIFILPTETGFTTLAINKDDHQFVEKLDSLL</sequence>
<protein>
    <recommendedName>
        <fullName evidence="1">3-dehydroquinate synthase</fullName>
        <shortName evidence="1">DHQS</shortName>
        <ecNumber evidence="1">4.2.3.4</ecNumber>
    </recommendedName>
</protein>
<comment type="function">
    <text evidence="1">Catalyzes the conversion of 3-deoxy-D-arabino-heptulosonate 7-phosphate (DAHP) to dehydroquinate (DHQ).</text>
</comment>
<comment type="catalytic activity">
    <reaction evidence="1">
        <text>7-phospho-2-dehydro-3-deoxy-D-arabino-heptonate = 3-dehydroquinate + phosphate</text>
        <dbReference type="Rhea" id="RHEA:21968"/>
        <dbReference type="ChEBI" id="CHEBI:32364"/>
        <dbReference type="ChEBI" id="CHEBI:43474"/>
        <dbReference type="ChEBI" id="CHEBI:58394"/>
        <dbReference type="EC" id="4.2.3.4"/>
    </reaction>
</comment>
<comment type="cofactor">
    <cofactor evidence="1">
        <name>NAD(+)</name>
        <dbReference type="ChEBI" id="CHEBI:57540"/>
    </cofactor>
</comment>
<comment type="cofactor">
    <cofactor evidence="1">
        <name>Co(2+)</name>
        <dbReference type="ChEBI" id="CHEBI:48828"/>
    </cofactor>
    <cofactor evidence="1">
        <name>Zn(2+)</name>
        <dbReference type="ChEBI" id="CHEBI:29105"/>
    </cofactor>
    <text evidence="1">Binds 1 divalent metal cation per subunit. Can use either Co(2+) or Zn(2+).</text>
</comment>
<comment type="pathway">
    <text evidence="1">Metabolic intermediate biosynthesis; chorismate biosynthesis; chorismate from D-erythrose 4-phosphate and phosphoenolpyruvate: step 2/7.</text>
</comment>
<comment type="subcellular location">
    <subcellularLocation>
        <location evidence="1">Cytoplasm</location>
    </subcellularLocation>
</comment>
<comment type="similarity">
    <text evidence="1">Belongs to the sugar phosphate cyclases superfamily. Dehydroquinate synthase family.</text>
</comment>
<reference key="1">
    <citation type="journal article" date="2002" name="Proc. Natl. Acad. Sci. U.S.A.">
        <title>Genome sequence and comparative microarray analysis of serotype M18 group A Streptococcus strains associated with acute rheumatic fever outbreaks.</title>
        <authorList>
            <person name="Smoot J.C."/>
            <person name="Barbian K.D."/>
            <person name="Van Gompel J.J."/>
            <person name="Smoot L.M."/>
            <person name="Chaussee M.S."/>
            <person name="Sylva G.L."/>
            <person name="Sturdevant D.E."/>
            <person name="Ricklefs S.M."/>
            <person name="Porcella S.F."/>
            <person name="Parkins L.D."/>
            <person name="Beres S.B."/>
            <person name="Campbell D.S."/>
            <person name="Smith T.M."/>
            <person name="Zhang Q."/>
            <person name="Kapur V."/>
            <person name="Daly J.A."/>
            <person name="Veasy L.G."/>
            <person name="Musser J.M."/>
        </authorList>
    </citation>
    <scope>NUCLEOTIDE SEQUENCE [LARGE SCALE GENOMIC DNA]</scope>
    <source>
        <strain>MGAS8232</strain>
    </source>
</reference>
<feature type="chain" id="PRO_0000140797" description="3-dehydroquinate synthase">
    <location>
        <begin position="1"/>
        <end position="357"/>
    </location>
</feature>
<feature type="binding site" evidence="1">
    <location>
        <begin position="104"/>
        <end position="108"/>
    </location>
    <ligand>
        <name>NAD(+)</name>
        <dbReference type="ChEBI" id="CHEBI:57540"/>
    </ligand>
</feature>
<feature type="binding site" evidence="1">
    <location>
        <begin position="128"/>
        <end position="129"/>
    </location>
    <ligand>
        <name>NAD(+)</name>
        <dbReference type="ChEBI" id="CHEBI:57540"/>
    </ligand>
</feature>
<feature type="binding site" evidence="1">
    <location>
        <position position="141"/>
    </location>
    <ligand>
        <name>NAD(+)</name>
        <dbReference type="ChEBI" id="CHEBI:57540"/>
    </ligand>
</feature>
<feature type="binding site" evidence="1">
    <location>
        <begin position="168"/>
        <end position="171"/>
    </location>
    <ligand>
        <name>NAD(+)</name>
        <dbReference type="ChEBI" id="CHEBI:57540"/>
    </ligand>
</feature>
<feature type="binding site" evidence="1">
    <location>
        <position position="183"/>
    </location>
    <ligand>
        <name>Zn(2+)</name>
        <dbReference type="ChEBI" id="CHEBI:29105"/>
    </ligand>
</feature>
<feature type="binding site" evidence="1">
    <location>
        <position position="243"/>
    </location>
    <ligand>
        <name>Zn(2+)</name>
        <dbReference type="ChEBI" id="CHEBI:29105"/>
    </ligand>
</feature>
<feature type="binding site" evidence="1">
    <location>
        <position position="260"/>
    </location>
    <ligand>
        <name>Zn(2+)</name>
        <dbReference type="ChEBI" id="CHEBI:29105"/>
    </ligand>
</feature>
<organism>
    <name type="scientific">Streptococcus pyogenes serotype M18 (strain MGAS8232)</name>
    <dbReference type="NCBI Taxonomy" id="186103"/>
    <lineage>
        <taxon>Bacteria</taxon>
        <taxon>Bacillati</taxon>
        <taxon>Bacillota</taxon>
        <taxon>Bacilli</taxon>
        <taxon>Lactobacillales</taxon>
        <taxon>Streptococcaceae</taxon>
        <taxon>Streptococcus</taxon>
    </lineage>
</organism>